<dbReference type="EMBL" id="CP001029">
    <property type="protein sequence ID" value="ACB81097.1"/>
    <property type="molecule type" value="Genomic_DNA"/>
</dbReference>
<dbReference type="RefSeq" id="WP_003600267.1">
    <property type="nucleotide sequence ID" value="NC_010725.1"/>
</dbReference>
<dbReference type="SMR" id="B1ZEN4"/>
<dbReference type="STRING" id="441620.Mpop_2942"/>
<dbReference type="GeneID" id="72990472"/>
<dbReference type="KEGG" id="mpo:Mpop_2942"/>
<dbReference type="eggNOG" id="COG1923">
    <property type="taxonomic scope" value="Bacteria"/>
</dbReference>
<dbReference type="HOGENOM" id="CLU_113688_0_0_5"/>
<dbReference type="OrthoDB" id="9799751at2"/>
<dbReference type="Proteomes" id="UP000007136">
    <property type="component" value="Chromosome"/>
</dbReference>
<dbReference type="GO" id="GO:0005829">
    <property type="term" value="C:cytosol"/>
    <property type="evidence" value="ECO:0007669"/>
    <property type="project" value="TreeGrafter"/>
</dbReference>
<dbReference type="GO" id="GO:0003723">
    <property type="term" value="F:RNA binding"/>
    <property type="evidence" value="ECO:0007669"/>
    <property type="project" value="UniProtKB-UniRule"/>
</dbReference>
<dbReference type="GO" id="GO:0006355">
    <property type="term" value="P:regulation of DNA-templated transcription"/>
    <property type="evidence" value="ECO:0007669"/>
    <property type="project" value="InterPro"/>
</dbReference>
<dbReference type="GO" id="GO:0043487">
    <property type="term" value="P:regulation of RNA stability"/>
    <property type="evidence" value="ECO:0007669"/>
    <property type="project" value="TreeGrafter"/>
</dbReference>
<dbReference type="GO" id="GO:0045974">
    <property type="term" value="P:regulation of translation, ncRNA-mediated"/>
    <property type="evidence" value="ECO:0007669"/>
    <property type="project" value="TreeGrafter"/>
</dbReference>
<dbReference type="CDD" id="cd01716">
    <property type="entry name" value="Hfq"/>
    <property type="match status" value="1"/>
</dbReference>
<dbReference type="FunFam" id="2.30.30.100:FF:000001">
    <property type="entry name" value="RNA-binding protein Hfq"/>
    <property type="match status" value="1"/>
</dbReference>
<dbReference type="Gene3D" id="2.30.30.100">
    <property type="match status" value="1"/>
</dbReference>
<dbReference type="HAMAP" id="MF_00436">
    <property type="entry name" value="Hfq"/>
    <property type="match status" value="1"/>
</dbReference>
<dbReference type="InterPro" id="IPR005001">
    <property type="entry name" value="Hfq"/>
</dbReference>
<dbReference type="InterPro" id="IPR010920">
    <property type="entry name" value="LSM_dom_sf"/>
</dbReference>
<dbReference type="InterPro" id="IPR047575">
    <property type="entry name" value="Sm"/>
</dbReference>
<dbReference type="NCBIfam" id="TIGR02383">
    <property type="entry name" value="Hfq"/>
    <property type="match status" value="1"/>
</dbReference>
<dbReference type="NCBIfam" id="NF001602">
    <property type="entry name" value="PRK00395.1"/>
    <property type="match status" value="1"/>
</dbReference>
<dbReference type="PANTHER" id="PTHR34772">
    <property type="entry name" value="RNA-BINDING PROTEIN HFQ"/>
    <property type="match status" value="1"/>
</dbReference>
<dbReference type="PANTHER" id="PTHR34772:SF1">
    <property type="entry name" value="RNA-BINDING PROTEIN HFQ"/>
    <property type="match status" value="1"/>
</dbReference>
<dbReference type="Pfam" id="PF17209">
    <property type="entry name" value="Hfq"/>
    <property type="match status" value="1"/>
</dbReference>
<dbReference type="SUPFAM" id="SSF50182">
    <property type="entry name" value="Sm-like ribonucleoproteins"/>
    <property type="match status" value="1"/>
</dbReference>
<dbReference type="PROSITE" id="PS52002">
    <property type="entry name" value="SM"/>
    <property type="match status" value="1"/>
</dbReference>
<keyword id="KW-0694">RNA-binding</keyword>
<keyword id="KW-0346">Stress response</keyword>
<organism>
    <name type="scientific">Methylorubrum populi (strain ATCC BAA-705 / NCIMB 13946 / BJ001)</name>
    <name type="common">Methylobacterium populi</name>
    <dbReference type="NCBI Taxonomy" id="441620"/>
    <lineage>
        <taxon>Bacteria</taxon>
        <taxon>Pseudomonadati</taxon>
        <taxon>Pseudomonadota</taxon>
        <taxon>Alphaproteobacteria</taxon>
        <taxon>Hyphomicrobiales</taxon>
        <taxon>Methylobacteriaceae</taxon>
        <taxon>Methylorubrum</taxon>
    </lineage>
</organism>
<name>HFQ_METPB</name>
<sequence length="84" mass="9541">MAGERAQNLQDTFLNHVRKNKIPLTIFLVNGVKLQGVVTWFDNFCVLLRRDGHSQLVYKHAISTIMPGHPVQLFEPDETAPEKA</sequence>
<reference key="1">
    <citation type="submission" date="2008-04" db="EMBL/GenBank/DDBJ databases">
        <title>Complete sequence of chromosome of Methylobacterium populi BJ001.</title>
        <authorList>
            <consortium name="US DOE Joint Genome Institute"/>
            <person name="Copeland A."/>
            <person name="Lucas S."/>
            <person name="Lapidus A."/>
            <person name="Glavina del Rio T."/>
            <person name="Dalin E."/>
            <person name="Tice H."/>
            <person name="Bruce D."/>
            <person name="Goodwin L."/>
            <person name="Pitluck S."/>
            <person name="Chertkov O."/>
            <person name="Brettin T."/>
            <person name="Detter J.C."/>
            <person name="Han C."/>
            <person name="Kuske C.R."/>
            <person name="Schmutz J."/>
            <person name="Larimer F."/>
            <person name="Land M."/>
            <person name="Hauser L."/>
            <person name="Kyrpides N."/>
            <person name="Mikhailova N."/>
            <person name="Marx C."/>
            <person name="Richardson P."/>
        </authorList>
    </citation>
    <scope>NUCLEOTIDE SEQUENCE [LARGE SCALE GENOMIC DNA]</scope>
    <source>
        <strain>ATCC BAA-705 / NCIMB 13946 / BJ001</strain>
    </source>
</reference>
<proteinExistence type="inferred from homology"/>
<evidence type="ECO:0000255" key="1">
    <source>
        <dbReference type="HAMAP-Rule" id="MF_00436"/>
    </source>
</evidence>
<evidence type="ECO:0000255" key="2">
    <source>
        <dbReference type="PROSITE-ProRule" id="PRU01346"/>
    </source>
</evidence>
<protein>
    <recommendedName>
        <fullName evidence="1">RNA-binding protein Hfq</fullName>
    </recommendedName>
</protein>
<feature type="chain" id="PRO_1000190339" description="RNA-binding protein Hfq">
    <location>
        <begin position="1"/>
        <end position="84"/>
    </location>
</feature>
<feature type="domain" description="Sm" evidence="2">
    <location>
        <begin position="11"/>
        <end position="71"/>
    </location>
</feature>
<comment type="function">
    <text evidence="1">RNA chaperone that binds small regulatory RNA (sRNAs) and mRNAs to facilitate mRNA translational regulation in response to envelope stress, environmental stress and changes in metabolite concentrations. Also binds with high specificity to tRNAs.</text>
</comment>
<comment type="subunit">
    <text evidence="1">Homohexamer.</text>
</comment>
<comment type="similarity">
    <text evidence="1">Belongs to the Hfq family.</text>
</comment>
<accession>B1ZEN4</accession>
<gene>
    <name evidence="1" type="primary">hfq</name>
    <name type="ordered locus">Mpop_2942</name>
</gene>